<name>RL28_ACTP7</name>
<keyword id="KW-0687">Ribonucleoprotein</keyword>
<keyword id="KW-0689">Ribosomal protein</keyword>
<sequence>MSRVCQVTGKRPAVGNNRSHALNATRRRFLPNLHTHRFWVESENRFVTLRLTAKGMRIIDKKGIDAVLAEIRARGEKI</sequence>
<evidence type="ECO:0000255" key="1">
    <source>
        <dbReference type="HAMAP-Rule" id="MF_00373"/>
    </source>
</evidence>
<evidence type="ECO:0000256" key="2">
    <source>
        <dbReference type="SAM" id="MobiDB-lite"/>
    </source>
</evidence>
<evidence type="ECO:0000305" key="3"/>
<gene>
    <name evidence="1" type="primary">rpmB</name>
    <name type="ordered locus">APP7_2059</name>
</gene>
<feature type="chain" id="PRO_1000121573" description="Large ribosomal subunit protein bL28">
    <location>
        <begin position="1"/>
        <end position="78"/>
    </location>
</feature>
<feature type="region of interest" description="Disordered" evidence="2">
    <location>
        <begin position="1"/>
        <end position="20"/>
    </location>
</feature>
<protein>
    <recommendedName>
        <fullName evidence="1">Large ribosomal subunit protein bL28</fullName>
    </recommendedName>
    <alternativeName>
        <fullName evidence="3">50S ribosomal protein L28</fullName>
    </alternativeName>
</protein>
<comment type="similarity">
    <text evidence="1">Belongs to the bacterial ribosomal protein bL28 family.</text>
</comment>
<accession>B3H341</accession>
<reference key="1">
    <citation type="submission" date="2008-06" db="EMBL/GenBank/DDBJ databases">
        <title>Genome and proteome analysis of A. pleuropneumoniae serotype 7.</title>
        <authorList>
            <person name="Linke B."/>
            <person name="Buettner F."/>
            <person name="Martinez-Arias R."/>
            <person name="Goesmann A."/>
            <person name="Baltes N."/>
            <person name="Tegetmeyer H."/>
            <person name="Singh M."/>
            <person name="Gerlach G.F."/>
        </authorList>
    </citation>
    <scope>NUCLEOTIDE SEQUENCE [LARGE SCALE GENOMIC DNA]</scope>
    <source>
        <strain>AP76</strain>
    </source>
</reference>
<dbReference type="EMBL" id="CP001091">
    <property type="protein sequence ID" value="ACE62711.1"/>
    <property type="molecule type" value="Genomic_DNA"/>
</dbReference>
<dbReference type="RefSeq" id="WP_005599762.1">
    <property type="nucleotide sequence ID" value="NC_010939.1"/>
</dbReference>
<dbReference type="SMR" id="B3H341"/>
<dbReference type="GeneID" id="93297181"/>
<dbReference type="KEGG" id="apa:APP7_2059"/>
<dbReference type="HOGENOM" id="CLU_064548_3_1_6"/>
<dbReference type="Proteomes" id="UP000001226">
    <property type="component" value="Chromosome"/>
</dbReference>
<dbReference type="GO" id="GO:0022625">
    <property type="term" value="C:cytosolic large ribosomal subunit"/>
    <property type="evidence" value="ECO:0007669"/>
    <property type="project" value="TreeGrafter"/>
</dbReference>
<dbReference type="GO" id="GO:0003735">
    <property type="term" value="F:structural constituent of ribosome"/>
    <property type="evidence" value="ECO:0007669"/>
    <property type="project" value="InterPro"/>
</dbReference>
<dbReference type="GO" id="GO:0006412">
    <property type="term" value="P:translation"/>
    <property type="evidence" value="ECO:0007669"/>
    <property type="project" value="UniProtKB-UniRule"/>
</dbReference>
<dbReference type="FunFam" id="2.30.170.40:FF:000001">
    <property type="entry name" value="50S ribosomal protein L28"/>
    <property type="match status" value="1"/>
</dbReference>
<dbReference type="Gene3D" id="2.30.170.40">
    <property type="entry name" value="Ribosomal protein L28/L24"/>
    <property type="match status" value="1"/>
</dbReference>
<dbReference type="HAMAP" id="MF_00373">
    <property type="entry name" value="Ribosomal_bL28"/>
    <property type="match status" value="1"/>
</dbReference>
<dbReference type="InterPro" id="IPR026569">
    <property type="entry name" value="Ribosomal_bL28"/>
</dbReference>
<dbReference type="InterPro" id="IPR034704">
    <property type="entry name" value="Ribosomal_bL28/bL31-like_sf"/>
</dbReference>
<dbReference type="InterPro" id="IPR001383">
    <property type="entry name" value="Ribosomal_bL28_bact-type"/>
</dbReference>
<dbReference type="InterPro" id="IPR037147">
    <property type="entry name" value="Ribosomal_bL28_sf"/>
</dbReference>
<dbReference type="NCBIfam" id="TIGR00009">
    <property type="entry name" value="L28"/>
    <property type="match status" value="1"/>
</dbReference>
<dbReference type="PANTHER" id="PTHR13528">
    <property type="entry name" value="39S RIBOSOMAL PROTEIN L28, MITOCHONDRIAL"/>
    <property type="match status" value="1"/>
</dbReference>
<dbReference type="PANTHER" id="PTHR13528:SF2">
    <property type="entry name" value="LARGE RIBOSOMAL SUBUNIT PROTEIN BL28M"/>
    <property type="match status" value="1"/>
</dbReference>
<dbReference type="Pfam" id="PF00830">
    <property type="entry name" value="Ribosomal_L28"/>
    <property type="match status" value="1"/>
</dbReference>
<dbReference type="SUPFAM" id="SSF143800">
    <property type="entry name" value="L28p-like"/>
    <property type="match status" value="1"/>
</dbReference>
<proteinExistence type="inferred from homology"/>
<organism>
    <name type="scientific">Actinobacillus pleuropneumoniae serotype 7 (strain AP76)</name>
    <dbReference type="NCBI Taxonomy" id="537457"/>
    <lineage>
        <taxon>Bacteria</taxon>
        <taxon>Pseudomonadati</taxon>
        <taxon>Pseudomonadota</taxon>
        <taxon>Gammaproteobacteria</taxon>
        <taxon>Pasteurellales</taxon>
        <taxon>Pasteurellaceae</taxon>
        <taxon>Actinobacillus</taxon>
    </lineage>
</organism>